<organism>
    <name type="scientific">Arabidopsis thaliana</name>
    <name type="common">Mouse-ear cress</name>
    <dbReference type="NCBI Taxonomy" id="3702"/>
    <lineage>
        <taxon>Eukaryota</taxon>
        <taxon>Viridiplantae</taxon>
        <taxon>Streptophyta</taxon>
        <taxon>Embryophyta</taxon>
        <taxon>Tracheophyta</taxon>
        <taxon>Spermatophyta</taxon>
        <taxon>Magnoliopsida</taxon>
        <taxon>eudicotyledons</taxon>
        <taxon>Gunneridae</taxon>
        <taxon>Pentapetalae</taxon>
        <taxon>rosids</taxon>
        <taxon>malvids</taxon>
        <taxon>Brassicales</taxon>
        <taxon>Brassicaceae</taxon>
        <taxon>Camelineae</taxon>
        <taxon>Arabidopsis</taxon>
    </lineage>
</organism>
<feature type="signal peptide" evidence="1">
    <location>
        <begin position="1"/>
        <end position="28"/>
    </location>
</feature>
<feature type="chain" id="PRO_5010246202" description="Receptor-like protein 9b">
    <location>
        <begin position="29"/>
        <end position="940"/>
    </location>
</feature>
<feature type="topological domain" description="Extracellular" evidence="1">
    <location>
        <begin position="29"/>
        <end position="895"/>
    </location>
</feature>
<feature type="transmembrane region" description="Helical" evidence="1">
    <location>
        <begin position="896"/>
        <end position="916"/>
    </location>
</feature>
<feature type="topological domain" description="Cytoplasmic" evidence="1">
    <location>
        <begin position="917"/>
        <end position="940"/>
    </location>
</feature>
<feature type="repeat" description="LRR 1" evidence="1">
    <location>
        <begin position="108"/>
        <end position="136"/>
    </location>
</feature>
<feature type="repeat" description="LRR 2" evidence="1">
    <location>
        <begin position="137"/>
        <end position="163"/>
    </location>
</feature>
<feature type="repeat" description="LRR 3" evidence="1">
    <location>
        <begin position="165"/>
        <end position="185"/>
    </location>
</feature>
<feature type="repeat" description="LRR 4" evidence="1">
    <location>
        <begin position="186"/>
        <end position="211"/>
    </location>
</feature>
<feature type="repeat" description="LRR 5" evidence="1">
    <location>
        <begin position="213"/>
        <end position="232"/>
    </location>
</feature>
<feature type="repeat" description="LRR 6" evidence="1">
    <location>
        <begin position="233"/>
        <end position="255"/>
    </location>
</feature>
<feature type="repeat" description="LRR 7" evidence="1">
    <location>
        <begin position="257"/>
        <end position="279"/>
    </location>
</feature>
<feature type="repeat" description="LRR 8" evidence="1">
    <location>
        <begin position="281"/>
        <end position="304"/>
    </location>
</feature>
<feature type="repeat" description="LRR 9" evidence="1">
    <location>
        <begin position="306"/>
        <end position="330"/>
    </location>
</feature>
<feature type="repeat" description="LRR 10" evidence="1">
    <location>
        <begin position="331"/>
        <end position="354"/>
    </location>
</feature>
<feature type="repeat" description="LRR 11" evidence="1">
    <location>
        <begin position="355"/>
        <end position="378"/>
    </location>
</feature>
<feature type="repeat" description="LRR 12" evidence="1">
    <location>
        <begin position="379"/>
        <end position="402"/>
    </location>
</feature>
<feature type="repeat" description="LRR 13" evidence="1">
    <location>
        <begin position="403"/>
        <end position="426"/>
    </location>
</feature>
<feature type="repeat" description="LRR 14" evidence="1">
    <location>
        <begin position="427"/>
        <end position="450"/>
    </location>
</feature>
<feature type="repeat" description="LRR 15" evidence="1">
    <location>
        <begin position="452"/>
        <end position="475"/>
    </location>
</feature>
<feature type="repeat" description="LRR 16" evidence="1">
    <location>
        <begin position="477"/>
        <end position="502"/>
    </location>
</feature>
<feature type="repeat" description="LRR 17; degenerate" evidence="4">
    <location>
        <begin position="503"/>
        <end position="522"/>
    </location>
</feature>
<feature type="repeat" description="LRR 18" evidence="1">
    <location>
        <begin position="523"/>
        <end position="546"/>
    </location>
</feature>
<feature type="repeat" description="LRR 19" evidence="1">
    <location>
        <begin position="547"/>
        <end position="570"/>
    </location>
</feature>
<feature type="repeat" description="LRR 20" evidence="1">
    <location>
        <begin position="571"/>
        <end position="593"/>
    </location>
</feature>
<feature type="repeat" description="LRR 21" evidence="1">
    <location>
        <begin position="595"/>
        <end position="615"/>
    </location>
</feature>
<feature type="repeat" description="LRR 22" evidence="1">
    <location>
        <begin position="616"/>
        <end position="639"/>
    </location>
</feature>
<feature type="repeat" description="LRR 23" evidence="1">
    <location>
        <begin position="641"/>
        <end position="662"/>
    </location>
</feature>
<feature type="repeat" description="LRR 24" evidence="1">
    <location>
        <begin position="663"/>
        <end position="686"/>
    </location>
</feature>
<feature type="repeat" description="LRR 25" evidence="1">
    <location>
        <begin position="752"/>
        <end position="776"/>
    </location>
</feature>
<feature type="repeat" description="LRR 26" evidence="1">
    <location>
        <begin position="777"/>
        <end position="799"/>
    </location>
</feature>
<feature type="repeat" description="LRR 27" evidence="1">
    <location>
        <begin position="801"/>
        <end position="824"/>
    </location>
</feature>
<feature type="repeat" description="LRR 28" evidence="1">
    <location>
        <begin position="826"/>
        <end position="849"/>
    </location>
</feature>
<feature type="glycosylation site" description="N-linked (GlcNAc...) asparagine" evidence="2">
    <location>
        <position position="53"/>
    </location>
</feature>
<feature type="glycosylation site" description="N-linked (GlcNAc...) asparagine" evidence="2">
    <location>
        <position position="63"/>
    </location>
</feature>
<feature type="glycosylation site" description="N-linked (GlcNAc...) asparagine" evidence="2">
    <location>
        <position position="66"/>
    </location>
</feature>
<feature type="glycosylation site" description="N-linked (GlcNAc...) asparagine" evidence="2">
    <location>
        <position position="101"/>
    </location>
</feature>
<feature type="glycosylation site" description="N-linked (GlcNAc...) asparagine" evidence="2">
    <location>
        <position position="115"/>
    </location>
</feature>
<feature type="glycosylation site" description="N-linked (GlcNAc...) asparagine" evidence="2">
    <location>
        <position position="151"/>
    </location>
</feature>
<feature type="glycosylation site" description="N-linked (GlcNAc...) asparagine" evidence="2">
    <location>
        <position position="270"/>
    </location>
</feature>
<feature type="glycosylation site" description="N-linked (GlcNAc...) asparagine" evidence="2">
    <location>
        <position position="304"/>
    </location>
</feature>
<feature type="glycosylation site" description="N-linked (GlcNAc...) asparagine" evidence="2">
    <location>
        <position position="361"/>
    </location>
</feature>
<feature type="glycosylation site" description="N-linked (GlcNAc...) asparagine" evidence="2">
    <location>
        <position position="389"/>
    </location>
</feature>
<feature type="glycosylation site" description="N-linked (GlcNAc...) asparagine" evidence="2">
    <location>
        <position position="402"/>
    </location>
</feature>
<feature type="glycosylation site" description="N-linked (GlcNAc...) asparagine" evidence="2">
    <location>
        <position position="434"/>
    </location>
</feature>
<feature type="glycosylation site" description="N-linked (GlcNAc...) asparagine" evidence="2">
    <location>
        <position position="463"/>
    </location>
</feature>
<feature type="glycosylation site" description="N-linked (GlcNAc...) asparagine" evidence="2">
    <location>
        <position position="685"/>
    </location>
</feature>
<feature type="glycosylation site" description="N-linked (GlcNAc...) asparagine" evidence="2">
    <location>
        <position position="783"/>
    </location>
</feature>
<feature type="glycosylation site" description="N-linked (GlcNAc...) asparagine" evidence="2">
    <location>
        <position position="799"/>
    </location>
</feature>
<feature type="glycosylation site" description="N-linked (GlcNAc...) asparagine" evidence="2">
    <location>
        <position position="831"/>
    </location>
</feature>
<feature type="glycosylation site" description="N-linked (GlcNAc...) asparagine" evidence="2">
    <location>
        <position position="836"/>
    </location>
</feature>
<feature type="glycosylation site" description="N-linked (GlcNAc...) asparagine" evidence="2">
    <location>
        <position position="867"/>
    </location>
</feature>
<feature type="glycosylation site" description="N-linked (GlcNAc...) asparagine" evidence="2">
    <location>
        <position position="873"/>
    </location>
</feature>
<protein>
    <recommendedName>
        <fullName evidence="4">Receptor-like protein 9b</fullName>
        <shortName evidence="4">AtRLP9b</shortName>
    </recommendedName>
    <alternativeName>
        <fullName evidence="3">Receptor like protein 9</fullName>
        <shortName evidence="3">AtRLP9</shortName>
    </alternativeName>
</protein>
<keyword id="KW-1003">Cell membrane</keyword>
<keyword id="KW-0325">Glycoprotein</keyword>
<keyword id="KW-0433">Leucine-rich repeat</keyword>
<keyword id="KW-0472">Membrane</keyword>
<keyword id="KW-0675">Receptor</keyword>
<keyword id="KW-1185">Reference proteome</keyword>
<keyword id="KW-0677">Repeat</keyword>
<keyword id="KW-0732">Signal</keyword>
<keyword id="KW-0812">Transmembrane</keyword>
<keyword id="KW-1133">Transmembrane helix</keyword>
<name>RLP9B_ARATH</name>
<dbReference type="EMBL" id="AC079131">
    <property type="protein sequence ID" value="AAG50756.1"/>
    <property type="status" value="ALT_SEQ"/>
    <property type="molecule type" value="Genomic_DNA"/>
</dbReference>
<dbReference type="EMBL" id="CP002684">
    <property type="protein sequence ID" value="ANM60038.1"/>
    <property type="molecule type" value="Genomic_DNA"/>
</dbReference>
<dbReference type="EMBL" id="CP002684">
    <property type="protein sequence ID" value="AEE33511.1"/>
    <property type="status" value="ALT_SEQ"/>
    <property type="molecule type" value="Genomic_DNA"/>
</dbReference>
<dbReference type="PIR" id="C96615">
    <property type="entry name" value="C96615"/>
</dbReference>
<dbReference type="RefSeq" id="NP_001185260.1">
    <property type="nucleotide sequence ID" value="NM_001198331.1"/>
</dbReference>
<dbReference type="RefSeq" id="NP_001322351.1">
    <property type="nucleotide sequence ID" value="NM_001333819.1"/>
</dbReference>
<dbReference type="SMR" id="A0A1P8ATR9"/>
<dbReference type="STRING" id="3702.A0A1P8ATR9"/>
<dbReference type="GlyCosmos" id="A0A1P8ATR9">
    <property type="glycosylation" value="20 sites, No reported glycans"/>
</dbReference>
<dbReference type="GlyGen" id="A0A1P8ATR9">
    <property type="glycosylation" value="20 sites"/>
</dbReference>
<dbReference type="EnsemblPlants" id="AT1G58190.3">
    <property type="protein sequence ID" value="AT1G58190.3"/>
    <property type="gene ID" value="AT1G58190"/>
</dbReference>
<dbReference type="GeneID" id="842186"/>
<dbReference type="Gramene" id="AT1G58190.3">
    <property type="protein sequence ID" value="AT1G58190.3"/>
    <property type="gene ID" value="AT1G58190"/>
</dbReference>
<dbReference type="KEGG" id="ath:AT1G58190"/>
<dbReference type="Araport" id="AT1G58195"/>
<dbReference type="TAIR" id="AT1G58195"/>
<dbReference type="InParanoid" id="A0A1P8ATR9"/>
<dbReference type="PRO" id="PR:A0A1P8ATR9"/>
<dbReference type="Proteomes" id="UP000006548">
    <property type="component" value="Chromosome 1"/>
</dbReference>
<dbReference type="ExpressionAtlas" id="A0A1P8ATR9">
    <property type="expression patterns" value="baseline and differential"/>
</dbReference>
<dbReference type="GO" id="GO:0005886">
    <property type="term" value="C:plasma membrane"/>
    <property type="evidence" value="ECO:0007669"/>
    <property type="project" value="UniProtKB-SubCell"/>
</dbReference>
<dbReference type="FunFam" id="3.80.10.10:FF:000041">
    <property type="entry name" value="LRR receptor-like serine/threonine-protein kinase ERECTA"/>
    <property type="match status" value="1"/>
</dbReference>
<dbReference type="FunFam" id="3.80.10.10:FF:000095">
    <property type="entry name" value="LRR receptor-like serine/threonine-protein kinase GSO1"/>
    <property type="match status" value="1"/>
</dbReference>
<dbReference type="FunFam" id="3.80.10.10:FF:000213">
    <property type="entry name" value="Tyrosine-sulfated glycopeptide receptor 1"/>
    <property type="match status" value="1"/>
</dbReference>
<dbReference type="Gene3D" id="3.80.10.10">
    <property type="entry name" value="Ribonuclease Inhibitor"/>
    <property type="match status" value="5"/>
</dbReference>
<dbReference type="InterPro" id="IPR001611">
    <property type="entry name" value="Leu-rich_rpt"/>
</dbReference>
<dbReference type="InterPro" id="IPR003591">
    <property type="entry name" value="Leu-rich_rpt_typical-subtyp"/>
</dbReference>
<dbReference type="InterPro" id="IPR032675">
    <property type="entry name" value="LRR_dom_sf"/>
</dbReference>
<dbReference type="InterPro" id="IPR013210">
    <property type="entry name" value="LRR_N_plant-typ"/>
</dbReference>
<dbReference type="InterPro" id="IPR051502">
    <property type="entry name" value="RLP_Defense_Trigger"/>
</dbReference>
<dbReference type="PANTHER" id="PTHR48062">
    <property type="entry name" value="RECEPTOR-LIKE PROTEIN 14"/>
    <property type="match status" value="1"/>
</dbReference>
<dbReference type="PANTHER" id="PTHR48062:SF25">
    <property type="entry name" value="RECEPTOR-LIKE PROTEIN 9A-RELATED"/>
    <property type="match status" value="1"/>
</dbReference>
<dbReference type="Pfam" id="PF00560">
    <property type="entry name" value="LRR_1"/>
    <property type="match status" value="5"/>
</dbReference>
<dbReference type="Pfam" id="PF13855">
    <property type="entry name" value="LRR_8"/>
    <property type="match status" value="3"/>
</dbReference>
<dbReference type="Pfam" id="PF08263">
    <property type="entry name" value="LRRNT_2"/>
    <property type="match status" value="1"/>
</dbReference>
<dbReference type="SMART" id="SM00365">
    <property type="entry name" value="LRR_SD22"/>
    <property type="match status" value="7"/>
</dbReference>
<dbReference type="SMART" id="SM00369">
    <property type="entry name" value="LRR_TYP"/>
    <property type="match status" value="9"/>
</dbReference>
<dbReference type="SUPFAM" id="SSF52058">
    <property type="entry name" value="L domain-like"/>
    <property type="match status" value="2"/>
</dbReference>
<dbReference type="SUPFAM" id="SSF52047">
    <property type="entry name" value="RNI-like"/>
    <property type="match status" value="1"/>
</dbReference>
<accession>A0A1P8ATR9</accession>
<accession>F4I9S2</accession>
<accession>Q9C6R1</accession>
<evidence type="ECO:0000255" key="1"/>
<evidence type="ECO:0000255" key="2">
    <source>
        <dbReference type="PROSITE-ProRule" id="PRU00498"/>
    </source>
</evidence>
<evidence type="ECO:0000303" key="3">
    <source>
    </source>
</evidence>
<evidence type="ECO:0000305" key="4"/>
<evidence type="ECO:0000312" key="5">
    <source>
        <dbReference type="EMBL" id="AAG50756.1"/>
    </source>
</evidence>
<proteinExistence type="inferred from homology"/>
<gene>
    <name evidence="4" type="primary">RLP9B</name>
    <name evidence="3" type="synonym">RLP9</name>
    <name evidence="4" type="ordered locus">At1g58195</name>
    <name evidence="5" type="ORF">T18I24.10</name>
</gene>
<comment type="subcellular location">
    <subcellularLocation>
        <location evidence="4">Cell membrane</location>
        <topology evidence="4">Single-pass type I membrane protein</topology>
    </subcellularLocation>
</comment>
<comment type="similarity">
    <text evidence="4">Belongs to the RLP family.</text>
</comment>
<comment type="sequence caution" evidence="4">
    <conflict type="erroneous gene model prediction">
        <sequence resource="EMBL-CDS" id="AAG50756"/>
    </conflict>
    <text>The predicted gene At1g58190 has been split into 2 genes: At1g58190 and At1g58195.</text>
</comment>
<comment type="sequence caution" evidence="4">
    <conflict type="erroneous gene model prediction">
        <sequence resource="EMBL-CDS" id="AEE33511"/>
    </conflict>
    <text>The predicted gene At1g58190 has been split into 2 genes: At1g58190 and At1g58195.</text>
</comment>
<sequence length="940" mass="106519">MLMMFSPAFVMVMDLMVLVMMIMMMVSSLDAHGHISCIESERKGLLELKAYLNISEYPYDWPNDTNNSDCCKWERVKCDLTSGRVIGLLLTDTYYPPPLLNLSLFYPFGELQTLNLSNFWCQGWFDHIHGYKSFERLKNLEILDISENGVNNTVLPFINTASSLKTLILHGNNMEGTFPMKELINLRNLELLDLSKNQFVGPVPDLANFHNLQGLDMSDNKFSGSNKGLCQLKNLRELDLSQNKFTGQFPQCFDSLTQLQVLDISSNNFNGTVPSLIRNLDSVEYLALSDNEFKGFFSLELIANLSKLKVFKLSSRSNLLRLKKLSSLQPKFQLSVIELQNCNLENVPSFIQHQKDLHVINLSNNKLTGVFPYWLLEKYPNLRVLLLQNNSLTMLELPRLLNHTLQILDLSANNFDQRLPENIGKVLPNIRHLNLSNNGFQWILPSSFGEMKDIKFLDLSHNNFSGSLPMKFLIGCSSLHTLKLSYNKFFGQIFPKQTNFGSLVVLIANNNLFTGIADGLRNVQSLGVLDLSNNYLQGVIPSWFGGFFFAYLFLSNNLLEGTLPSTLFSKPTFKILDLSGNKFSGNLPSHFTGMDMSLLYLNDNEFSGTIPSTLIKDVLVLDLRNNKLSGTIPHFVKNEFILSLLLRGNTLTGHIPTDLCGLRSIRILDLANNRLKGSIPTCLNNVSFGRRLNYEVNGDKLPFEINDDEEFAVYSRLLVLPRQYSPDYTGVLMFNVEFASKSRYDSYTQESFNFMFGLDLSSNELSGDIPKELGDLQRIRALNLSHNSLSGLIPQSFSNLTDIESIDLSFNLLRGPIPQDLSKLDYMVVFNVSYNNLSGSIPSHGKFSTLDETNFIGNLLLCGSAINRSCDDNSTTEFLESDDQSGDEETTIDMEIFYWSLAATYGVTWITFIVFLCFDSPWRRVWFHFVDAFISLFKCV</sequence>
<reference key="1">
    <citation type="journal article" date="2000" name="Nature">
        <title>Sequence and analysis of chromosome 1 of the plant Arabidopsis thaliana.</title>
        <authorList>
            <person name="Theologis A."/>
            <person name="Ecker J.R."/>
            <person name="Palm C.J."/>
            <person name="Federspiel N.A."/>
            <person name="Kaul S."/>
            <person name="White O."/>
            <person name="Alonso J."/>
            <person name="Altafi H."/>
            <person name="Araujo R."/>
            <person name="Bowman C.L."/>
            <person name="Brooks S.Y."/>
            <person name="Buehler E."/>
            <person name="Chan A."/>
            <person name="Chao Q."/>
            <person name="Chen H."/>
            <person name="Cheuk R.F."/>
            <person name="Chin C.W."/>
            <person name="Chung M.K."/>
            <person name="Conn L."/>
            <person name="Conway A.B."/>
            <person name="Conway A.R."/>
            <person name="Creasy T.H."/>
            <person name="Dewar K."/>
            <person name="Dunn P."/>
            <person name="Etgu P."/>
            <person name="Feldblyum T.V."/>
            <person name="Feng J.-D."/>
            <person name="Fong B."/>
            <person name="Fujii C.Y."/>
            <person name="Gill J.E."/>
            <person name="Goldsmith A.D."/>
            <person name="Haas B."/>
            <person name="Hansen N.F."/>
            <person name="Hughes B."/>
            <person name="Huizar L."/>
            <person name="Hunter J.L."/>
            <person name="Jenkins J."/>
            <person name="Johnson-Hopson C."/>
            <person name="Khan S."/>
            <person name="Khaykin E."/>
            <person name="Kim C.J."/>
            <person name="Koo H.L."/>
            <person name="Kremenetskaia I."/>
            <person name="Kurtz D.B."/>
            <person name="Kwan A."/>
            <person name="Lam B."/>
            <person name="Langin-Hooper S."/>
            <person name="Lee A."/>
            <person name="Lee J.M."/>
            <person name="Lenz C.A."/>
            <person name="Li J.H."/>
            <person name="Li Y.-P."/>
            <person name="Lin X."/>
            <person name="Liu S.X."/>
            <person name="Liu Z.A."/>
            <person name="Luros J.S."/>
            <person name="Maiti R."/>
            <person name="Marziali A."/>
            <person name="Militscher J."/>
            <person name="Miranda M."/>
            <person name="Nguyen M."/>
            <person name="Nierman W.C."/>
            <person name="Osborne B.I."/>
            <person name="Pai G."/>
            <person name="Peterson J."/>
            <person name="Pham P.K."/>
            <person name="Rizzo M."/>
            <person name="Rooney T."/>
            <person name="Rowley D."/>
            <person name="Sakano H."/>
            <person name="Salzberg S.L."/>
            <person name="Schwartz J.R."/>
            <person name="Shinn P."/>
            <person name="Southwick A.M."/>
            <person name="Sun H."/>
            <person name="Tallon L.J."/>
            <person name="Tambunga G."/>
            <person name="Toriumi M.J."/>
            <person name="Town C.D."/>
            <person name="Utterback T."/>
            <person name="Van Aken S."/>
            <person name="Vaysberg M."/>
            <person name="Vysotskaia V.S."/>
            <person name="Walker M."/>
            <person name="Wu D."/>
            <person name="Yu G."/>
            <person name="Fraser C.M."/>
            <person name="Venter J.C."/>
            <person name="Davis R.W."/>
        </authorList>
    </citation>
    <scope>NUCLEOTIDE SEQUENCE [LARGE SCALE GENOMIC DNA]</scope>
    <source>
        <strain>cv. Columbia</strain>
    </source>
</reference>
<reference key="2">
    <citation type="journal article" date="2017" name="Plant J.">
        <title>Araport11: a complete reannotation of the Arabidopsis thaliana reference genome.</title>
        <authorList>
            <person name="Cheng C.Y."/>
            <person name="Krishnakumar V."/>
            <person name="Chan A.P."/>
            <person name="Thibaud-Nissen F."/>
            <person name="Schobel S."/>
            <person name="Town C.D."/>
        </authorList>
    </citation>
    <scope>GENOME REANNOTATION</scope>
    <source>
        <strain>cv. Columbia</strain>
    </source>
</reference>
<reference key="3">
    <citation type="journal article" date="2005" name="Plant Physiol.">
        <title>Phylogenomic analysis of the receptor-like proteins of rice and Arabidopsis.</title>
        <authorList>
            <person name="Fritz-Laylin L.K."/>
            <person name="Krishnamurthy N."/>
            <person name="Toer M."/>
            <person name="Sjoelander K.V."/>
            <person name="Jones J.D."/>
        </authorList>
    </citation>
    <scope>GENE FAMILY</scope>
</reference>
<reference key="4">
    <citation type="journal article" date="2008" name="Plant Physiol.">
        <title>A genome-wide functional investigation into the roles of receptor-like proteins in Arabidopsis.</title>
        <authorList>
            <person name="Wang G."/>
            <person name="Ellendorff U."/>
            <person name="Kemp B."/>
            <person name="Mansfield J.W."/>
            <person name="Forsyth A."/>
            <person name="Mitchell K."/>
            <person name="Bastas K."/>
            <person name="Liu C.-M."/>
            <person name="Woods-Toer A."/>
            <person name="Zipfel C."/>
            <person name="de Wit P.J.G.M."/>
            <person name="Jones J.D.G."/>
            <person name="Toer M."/>
            <person name="Thomma B.P.H.J."/>
        </authorList>
    </citation>
    <scope>GENE FAMILY</scope>
    <scope>NOMENCLATURE</scope>
</reference>